<feature type="initiator methionine" description="Removed" evidence="1">
    <location>
        <position position="1"/>
    </location>
</feature>
<feature type="chain" id="PRO_0000186147" description="Troponin I, fast skeletal muscle">
    <location>
        <begin position="2"/>
        <end position="183"/>
    </location>
</feature>
<feature type="region of interest" description="Involved in binding TNC">
    <location>
        <begin position="2"/>
        <end position="48"/>
    </location>
</feature>
<feature type="region of interest" description="Involved in binding TNC and actin">
    <location>
        <begin position="97"/>
        <end position="117"/>
    </location>
</feature>
<feature type="modified residue" description="N-acetylserine" evidence="1">
    <location>
        <position position="2"/>
    </location>
</feature>
<feature type="helix" evidence="6">
    <location>
        <begin position="8"/>
        <end position="48"/>
    </location>
</feature>
<feature type="helix" evidence="6">
    <location>
        <begin position="58"/>
        <end position="96"/>
    </location>
</feature>
<feature type="turn" evidence="6">
    <location>
        <begin position="97"/>
        <end position="104"/>
    </location>
</feature>
<feature type="helix" evidence="6">
    <location>
        <begin position="119"/>
        <end position="127"/>
    </location>
</feature>
<feature type="helix" evidence="5">
    <location>
        <begin position="133"/>
        <end position="141"/>
    </location>
</feature>
<feature type="strand" evidence="5">
    <location>
        <begin position="142"/>
        <end position="153"/>
    </location>
</feature>
<feature type="helix" evidence="5">
    <location>
        <begin position="159"/>
        <end position="167"/>
    </location>
</feature>
<feature type="helix" evidence="5">
    <location>
        <begin position="170"/>
        <end position="178"/>
    </location>
</feature>
<evidence type="ECO:0000269" key="1">
    <source>
    </source>
</evidence>
<evidence type="ECO:0000305" key="2"/>
<evidence type="ECO:0007744" key="3">
    <source>
        <dbReference type="PDB" id="1YTZ"/>
    </source>
</evidence>
<evidence type="ECO:0007744" key="4">
    <source>
        <dbReference type="PDB" id="1YV0"/>
    </source>
</evidence>
<evidence type="ECO:0007829" key="5">
    <source>
        <dbReference type="PDB" id="1VDI"/>
    </source>
</evidence>
<evidence type="ECO:0007829" key="6">
    <source>
        <dbReference type="PDB" id="1YTZ"/>
    </source>
</evidence>
<accession>P68246</accession>
<accession>P02644</accession>
<reference key="1">
    <citation type="journal article" date="1993" name="Protein Sci.">
        <title>Cloning and expression of chicken skeletal muscle troponin I in Escherichia coli: the role of rare codons on the expression level.</title>
        <authorList>
            <person name="Quaggio R.B."/>
            <person name="Ferro J.A."/>
            <person name="Monteiro P.B."/>
            <person name="Reinach F.C."/>
        </authorList>
    </citation>
    <scope>NUCLEOTIDE SEQUENCE [MRNA]</scope>
    <source>
        <tissue>Pectoralis muscle</tissue>
    </source>
</reference>
<reference key="2">
    <citation type="journal article" date="1978" name="Eur. J. Biochem.">
        <title>The amino-acid sequence of chicken fast-skeletal-muscle troponin I.</title>
        <authorList>
            <person name="Wilkinson J.M."/>
            <person name="Grand R.J.A."/>
        </authorList>
    </citation>
    <scope>PROTEIN SEQUENCE OF 2-183</scope>
    <scope>ACETYLATION AT SER-2</scope>
</reference>
<reference key="3">
    <citation type="journal article" date="1986" name="Nucleic Acids Res.">
        <title>The chicken fast skeletal troponin I gene: exon organization and sequence.</title>
        <authorList>
            <person name="Nikovits W. Jr."/>
            <person name="Kuncio G."/>
            <person name="Ordahl C.P."/>
        </authorList>
    </citation>
    <scope>NUCLEOTIDE SEQUENCE [MRNA] OF 86-183</scope>
</reference>
<reference evidence="3 4" key="4">
    <citation type="journal article" date="2005" name="Proc. Natl. Acad. Sci. U.S.A.">
        <title>Ca(2+)-regulated structural changes in troponin.</title>
        <authorList>
            <person name="Vinogradova M.V."/>
            <person name="Stone D.B."/>
            <person name="Malanina G.G."/>
            <person name="Karatzaferi C."/>
            <person name="Cooke R."/>
            <person name="Mendelson R.A."/>
            <person name="Fletterick R.J."/>
        </authorList>
    </citation>
    <scope>X-RAY CRYSTALLOGRAPHY (3.0 ANGSTROMS) OF 2-183</scope>
</reference>
<comment type="function">
    <text>Troponin I is the inhibitory subunit of troponin, the thin filament regulatory complex which confers calcium-sensitivity to striated muscle actomyosin ATPase activity.</text>
</comment>
<comment type="subunit">
    <text>Binds to actin and tropomyosin.</text>
</comment>
<comment type="PTM">
    <text>The N-terminus is blocked.</text>
</comment>
<comment type="similarity">
    <text evidence="2">Belongs to the troponin I family.</text>
</comment>
<protein>
    <recommendedName>
        <fullName>Troponin I, fast skeletal muscle</fullName>
    </recommendedName>
    <alternativeName>
        <fullName>Troponin I, fast-twitch isoform</fullName>
    </alternativeName>
</protein>
<gene>
    <name type="primary">TNNI2</name>
</gene>
<keyword id="KW-0002">3D-structure</keyword>
<keyword id="KW-0007">Acetylation</keyword>
<keyword id="KW-0009">Actin-binding</keyword>
<keyword id="KW-0903">Direct protein sequencing</keyword>
<keyword id="KW-0514">Muscle protein</keyword>
<keyword id="KW-1185">Reference proteome</keyword>
<sequence length="183" mass="21234">MSDEEKKRRAATARRQHLKSAMLQLAVTEIEKEAAAKEVEKQNYLAEHCPPLSLPGSMQELQELCKKLHAKIDSVDEERYDTEVKLQKTNKELEDLSQKLFDLRGKFKRPPLRRVRMSADAMLRALLGSKHKVNMDLRANLKQVKKEDTEKEKDLRDVGDWRKNIEEKSGMEGRKKMFEAGES</sequence>
<proteinExistence type="evidence at protein level"/>
<organism>
    <name type="scientific">Gallus gallus</name>
    <name type="common">Chicken</name>
    <dbReference type="NCBI Taxonomy" id="9031"/>
    <lineage>
        <taxon>Eukaryota</taxon>
        <taxon>Metazoa</taxon>
        <taxon>Chordata</taxon>
        <taxon>Craniata</taxon>
        <taxon>Vertebrata</taxon>
        <taxon>Euteleostomi</taxon>
        <taxon>Archelosauria</taxon>
        <taxon>Archosauria</taxon>
        <taxon>Dinosauria</taxon>
        <taxon>Saurischia</taxon>
        <taxon>Theropoda</taxon>
        <taxon>Coelurosauria</taxon>
        <taxon>Aves</taxon>
        <taxon>Neognathae</taxon>
        <taxon>Galloanserae</taxon>
        <taxon>Galliformes</taxon>
        <taxon>Phasianidae</taxon>
        <taxon>Phasianinae</taxon>
        <taxon>Gallus</taxon>
    </lineage>
</organism>
<dbReference type="EMBL" id="U19926">
    <property type="protein sequence ID" value="AAA61952.1"/>
    <property type="molecule type" value="mRNA"/>
</dbReference>
<dbReference type="EMBL" id="X03832">
    <property type="protein sequence ID" value="CAA27447.1"/>
    <property type="molecule type" value="mRNA"/>
</dbReference>
<dbReference type="PIR" id="A24918">
    <property type="entry name" value="TPCHIS"/>
</dbReference>
<dbReference type="RefSeq" id="NP_990748.1">
    <property type="nucleotide sequence ID" value="NM_205417.2"/>
</dbReference>
<dbReference type="RefSeq" id="XP_046773891.1">
    <property type="nucleotide sequence ID" value="XM_046917935.1"/>
</dbReference>
<dbReference type="RefSeq" id="XP_046797449.1">
    <property type="nucleotide sequence ID" value="XM_046941493.1"/>
</dbReference>
<dbReference type="PDB" id="1VDI">
    <property type="method" value="NMR"/>
    <property type="chains" value="A=132-183"/>
</dbReference>
<dbReference type="PDB" id="1VDJ">
    <property type="method" value="NMR"/>
    <property type="chains" value="A=132-183"/>
</dbReference>
<dbReference type="PDB" id="1YTZ">
    <property type="method" value="X-ray"/>
    <property type="resolution" value="3.00 A"/>
    <property type="chains" value="I=2-183"/>
</dbReference>
<dbReference type="PDB" id="1YV0">
    <property type="method" value="X-ray"/>
    <property type="resolution" value="7.00 A"/>
    <property type="chains" value="I=2-138"/>
</dbReference>
<dbReference type="PDB" id="2W49">
    <property type="method" value="EM"/>
    <property type="resolution" value="35.00 A"/>
    <property type="chains" value="2/5/8/Z=4-144"/>
</dbReference>
<dbReference type="PDB" id="2W4U">
    <property type="method" value="EM"/>
    <property type="resolution" value="35.00 A"/>
    <property type="chains" value="2/5/8/Z=4-144"/>
</dbReference>
<dbReference type="PDBsum" id="1VDI"/>
<dbReference type="PDBsum" id="1VDJ"/>
<dbReference type="PDBsum" id="1YTZ"/>
<dbReference type="PDBsum" id="1YV0"/>
<dbReference type="PDBsum" id="2W49"/>
<dbReference type="PDBsum" id="2W4U"/>
<dbReference type="BMRB" id="P68246"/>
<dbReference type="SMR" id="P68246"/>
<dbReference type="FunCoup" id="P68246">
    <property type="interactions" value="8"/>
</dbReference>
<dbReference type="IntAct" id="P68246">
    <property type="interactions" value="1"/>
</dbReference>
<dbReference type="STRING" id="9031.ENSGALP00000010627"/>
<dbReference type="iPTMnet" id="P68246"/>
<dbReference type="PaxDb" id="9031-ENSGALP00000010627"/>
<dbReference type="GeneID" id="396386"/>
<dbReference type="KEGG" id="gga:396386"/>
<dbReference type="CTD" id="7136"/>
<dbReference type="VEuPathDB" id="HostDB:geneid_396386"/>
<dbReference type="eggNOG" id="KOG3977">
    <property type="taxonomic scope" value="Eukaryota"/>
</dbReference>
<dbReference type="HOGENOM" id="CLU_098686_1_0_1"/>
<dbReference type="InParanoid" id="P68246"/>
<dbReference type="OMA" id="KRHRAIT"/>
<dbReference type="OrthoDB" id="371899at2759"/>
<dbReference type="PhylomeDB" id="P68246"/>
<dbReference type="EvolutionaryTrace" id="P68246"/>
<dbReference type="PRO" id="PR:P68246"/>
<dbReference type="Proteomes" id="UP000000539">
    <property type="component" value="Unassembled WGS sequence"/>
</dbReference>
<dbReference type="GO" id="GO:0005861">
    <property type="term" value="C:troponin complex"/>
    <property type="evidence" value="ECO:0000318"/>
    <property type="project" value="GO_Central"/>
</dbReference>
<dbReference type="GO" id="GO:0003779">
    <property type="term" value="F:actin binding"/>
    <property type="evidence" value="ECO:0007669"/>
    <property type="project" value="UniProtKB-KW"/>
</dbReference>
<dbReference type="GO" id="GO:0060048">
    <property type="term" value="P:cardiac muscle contraction"/>
    <property type="evidence" value="ECO:0000318"/>
    <property type="project" value="GO_Central"/>
</dbReference>
<dbReference type="GO" id="GO:0003009">
    <property type="term" value="P:skeletal muscle contraction"/>
    <property type="evidence" value="ECO:0000318"/>
    <property type="project" value="GO_Central"/>
</dbReference>
<dbReference type="DisProt" id="DP01871"/>
<dbReference type="FunFam" id="1.20.5.350:FF:000002">
    <property type="entry name" value="troponin I, fast skeletal muscle"/>
    <property type="match status" value="1"/>
</dbReference>
<dbReference type="Gene3D" id="1.20.5.350">
    <property type="match status" value="1"/>
</dbReference>
<dbReference type="Gene3D" id="6.10.250.180">
    <property type="match status" value="1"/>
</dbReference>
<dbReference type="InterPro" id="IPR001978">
    <property type="entry name" value="Troponin"/>
</dbReference>
<dbReference type="InterPro" id="IPR050875">
    <property type="entry name" value="Troponin_I"/>
</dbReference>
<dbReference type="InterPro" id="IPR038077">
    <property type="entry name" value="Troponin_sf"/>
</dbReference>
<dbReference type="PANTHER" id="PTHR13738">
    <property type="entry name" value="TROPONIN I"/>
    <property type="match status" value="1"/>
</dbReference>
<dbReference type="PANTHER" id="PTHR13738:SF15">
    <property type="entry name" value="TROPONIN I, FAST SKELETAL MUSCLE"/>
    <property type="match status" value="1"/>
</dbReference>
<dbReference type="Pfam" id="PF00992">
    <property type="entry name" value="Troponin"/>
    <property type="match status" value="1"/>
</dbReference>
<dbReference type="SUPFAM" id="SSF90250">
    <property type="entry name" value="Troponin coil-coiled subunits"/>
    <property type="match status" value="1"/>
</dbReference>
<name>TNNI2_CHICK</name>